<sequence length="115" mass="12989">MNIINKIEQEQLKADVTPFNVGDTIKVHTRVIEGGKERIQIFQGIVIAKRGSGINEAFTVRKISYGEGVERVFPLHTPRIAKIEVVNRGKVRRAKLHYLRGRIGKDAMIVKSANR</sequence>
<protein>
    <recommendedName>
        <fullName evidence="1">Large ribosomal subunit protein bL19</fullName>
    </recommendedName>
    <alternativeName>
        <fullName evidence="2">50S ribosomal protein L19</fullName>
    </alternativeName>
</protein>
<dbReference type="EMBL" id="CP001071">
    <property type="protein sequence ID" value="ACD04042.1"/>
    <property type="molecule type" value="Genomic_DNA"/>
</dbReference>
<dbReference type="RefSeq" id="WP_012419257.1">
    <property type="nucleotide sequence ID" value="NZ_CP071807.1"/>
</dbReference>
<dbReference type="SMR" id="B2UM93"/>
<dbReference type="STRING" id="349741.Amuc_0198"/>
<dbReference type="PaxDb" id="349741-Amuc_0198"/>
<dbReference type="GeneID" id="86959665"/>
<dbReference type="KEGG" id="amu:Amuc_0198"/>
<dbReference type="eggNOG" id="COG0335">
    <property type="taxonomic scope" value="Bacteria"/>
</dbReference>
<dbReference type="HOGENOM" id="CLU_103507_2_2_0"/>
<dbReference type="OrthoDB" id="9803541at2"/>
<dbReference type="BioCyc" id="AMUC349741:G1GBX-223-MONOMER"/>
<dbReference type="Proteomes" id="UP000001031">
    <property type="component" value="Chromosome"/>
</dbReference>
<dbReference type="GO" id="GO:0022625">
    <property type="term" value="C:cytosolic large ribosomal subunit"/>
    <property type="evidence" value="ECO:0007669"/>
    <property type="project" value="TreeGrafter"/>
</dbReference>
<dbReference type="GO" id="GO:0003735">
    <property type="term" value="F:structural constituent of ribosome"/>
    <property type="evidence" value="ECO:0007669"/>
    <property type="project" value="InterPro"/>
</dbReference>
<dbReference type="GO" id="GO:0006412">
    <property type="term" value="P:translation"/>
    <property type="evidence" value="ECO:0007669"/>
    <property type="project" value="UniProtKB-UniRule"/>
</dbReference>
<dbReference type="FunFam" id="2.30.30.790:FF:000001">
    <property type="entry name" value="50S ribosomal protein L19"/>
    <property type="match status" value="1"/>
</dbReference>
<dbReference type="Gene3D" id="2.30.30.790">
    <property type="match status" value="1"/>
</dbReference>
<dbReference type="HAMAP" id="MF_00402">
    <property type="entry name" value="Ribosomal_bL19"/>
    <property type="match status" value="1"/>
</dbReference>
<dbReference type="InterPro" id="IPR001857">
    <property type="entry name" value="Ribosomal_bL19"/>
</dbReference>
<dbReference type="InterPro" id="IPR038657">
    <property type="entry name" value="Ribosomal_bL19_sf"/>
</dbReference>
<dbReference type="InterPro" id="IPR008991">
    <property type="entry name" value="Translation_prot_SH3-like_sf"/>
</dbReference>
<dbReference type="NCBIfam" id="TIGR01024">
    <property type="entry name" value="rplS_bact"/>
    <property type="match status" value="1"/>
</dbReference>
<dbReference type="PANTHER" id="PTHR15680:SF9">
    <property type="entry name" value="LARGE RIBOSOMAL SUBUNIT PROTEIN BL19M"/>
    <property type="match status" value="1"/>
</dbReference>
<dbReference type="PANTHER" id="PTHR15680">
    <property type="entry name" value="RIBOSOMAL PROTEIN L19"/>
    <property type="match status" value="1"/>
</dbReference>
<dbReference type="Pfam" id="PF01245">
    <property type="entry name" value="Ribosomal_L19"/>
    <property type="match status" value="1"/>
</dbReference>
<dbReference type="PIRSF" id="PIRSF002191">
    <property type="entry name" value="Ribosomal_L19"/>
    <property type="match status" value="1"/>
</dbReference>
<dbReference type="PRINTS" id="PR00061">
    <property type="entry name" value="RIBOSOMALL19"/>
</dbReference>
<dbReference type="SUPFAM" id="SSF50104">
    <property type="entry name" value="Translation proteins SH3-like domain"/>
    <property type="match status" value="1"/>
</dbReference>
<proteinExistence type="inferred from homology"/>
<accession>B2UM93</accession>
<reference key="1">
    <citation type="journal article" date="2011" name="PLoS ONE">
        <title>The genome of Akkermansia muciniphila, a dedicated intestinal mucin degrader, and its use in exploring intestinal metagenomes.</title>
        <authorList>
            <person name="van Passel M.W."/>
            <person name="Kant R."/>
            <person name="Zoetendal E.G."/>
            <person name="Plugge C.M."/>
            <person name="Derrien M."/>
            <person name="Malfatti S.A."/>
            <person name="Chain P.S."/>
            <person name="Woyke T."/>
            <person name="Palva A."/>
            <person name="de Vos W.M."/>
            <person name="Smidt H."/>
        </authorList>
    </citation>
    <scope>NUCLEOTIDE SEQUENCE [LARGE SCALE GENOMIC DNA]</scope>
    <source>
        <strain>ATCC BAA-835 / DSM 22959 / JCM 33894 / BCRC 81048 / CCUG 64013 / CIP 107961 / Muc</strain>
    </source>
</reference>
<organism>
    <name type="scientific">Akkermansia muciniphila (strain ATCC BAA-835 / DSM 22959 / JCM 33894 / BCRC 81048 / CCUG 64013 / CIP 107961 / Muc)</name>
    <dbReference type="NCBI Taxonomy" id="349741"/>
    <lineage>
        <taxon>Bacteria</taxon>
        <taxon>Pseudomonadati</taxon>
        <taxon>Verrucomicrobiota</taxon>
        <taxon>Verrucomicrobiia</taxon>
        <taxon>Verrucomicrobiales</taxon>
        <taxon>Akkermansiaceae</taxon>
        <taxon>Akkermansia</taxon>
    </lineage>
</organism>
<comment type="function">
    <text evidence="1">This protein is located at the 30S-50S ribosomal subunit interface and may play a role in the structure and function of the aminoacyl-tRNA binding site.</text>
</comment>
<comment type="similarity">
    <text evidence="1">Belongs to the bacterial ribosomal protein bL19 family.</text>
</comment>
<keyword id="KW-1185">Reference proteome</keyword>
<keyword id="KW-0687">Ribonucleoprotein</keyword>
<keyword id="KW-0689">Ribosomal protein</keyword>
<name>RL19_AKKM8</name>
<evidence type="ECO:0000255" key="1">
    <source>
        <dbReference type="HAMAP-Rule" id="MF_00402"/>
    </source>
</evidence>
<evidence type="ECO:0000305" key="2"/>
<gene>
    <name evidence="1" type="primary">rplS</name>
    <name type="ordered locus">Amuc_0198</name>
</gene>
<feature type="chain" id="PRO_1000193782" description="Large ribosomal subunit protein bL19">
    <location>
        <begin position="1"/>
        <end position="115"/>
    </location>
</feature>